<organism>
    <name type="scientific">Arabidopsis thaliana</name>
    <name type="common">Mouse-ear cress</name>
    <dbReference type="NCBI Taxonomy" id="3702"/>
    <lineage>
        <taxon>Eukaryota</taxon>
        <taxon>Viridiplantae</taxon>
        <taxon>Streptophyta</taxon>
        <taxon>Embryophyta</taxon>
        <taxon>Tracheophyta</taxon>
        <taxon>Spermatophyta</taxon>
        <taxon>Magnoliopsida</taxon>
        <taxon>eudicotyledons</taxon>
        <taxon>Gunneridae</taxon>
        <taxon>Pentapetalae</taxon>
        <taxon>rosids</taxon>
        <taxon>malvids</taxon>
        <taxon>Brassicales</taxon>
        <taxon>Brassicaceae</taxon>
        <taxon>Camelineae</taxon>
        <taxon>Arabidopsis</taxon>
    </lineage>
</organism>
<gene>
    <name type="primary">RPH8A</name>
</gene>
<reference key="1">
    <citation type="journal article" date="1998" name="Plant Cell">
        <title>Intragenic recombination and diversifying selection contribute to the evolution of downy mildew resistance at the RPP8 locus of Arabidopsis.</title>
        <authorList>
            <person name="McDowell J.M."/>
            <person name="Dhandaydham M."/>
            <person name="Long T.A."/>
            <person name="Aarts M.G.M."/>
            <person name="Goff S."/>
            <person name="Holub E.B."/>
            <person name="Dangl J.L."/>
        </authorList>
    </citation>
    <scope>NUCLEOTIDE SEQUENCE</scope>
    <scope>FUNCTION</scope>
    <source>
        <strain>cv. Landsberg erecta</strain>
    </source>
</reference>
<comment type="function">
    <text evidence="2">Disease resistance protein. Resistance proteins guard the plant against pathogens that contain an appropriate avirulence protein via an indirect interaction with this avirulence protein. That triggers a defense system including the hypersensitive response, which restricts the pathogen growth. In contrast to RPP8, it does not specifically recognize the Emco5 avirulence protein from Hyaloperonospora parasitica.</text>
</comment>
<comment type="similarity">
    <text evidence="3">Belongs to the disease resistance NB-LRR family. RPP8/HRT subfamily.</text>
</comment>
<comment type="caution">
    <text evidence="3">In cv. Columbia and cv. Di-17, this protein is not present due to an unequal crossing over between the RPP8 and RP8HA genes that creates a unique RPP8 gene.</text>
</comment>
<comment type="online information" name="NIB-LRRS">
    <link uri="http://niblrrs.ucdavis.edu"/>
    <text>Functional and comparative genomics of disease resistance gene homologs</text>
</comment>
<feature type="chain" id="PRO_0000212720" description="Disease resistance protein RPH8A">
    <location>
        <begin position="1"/>
        <end position="910"/>
    </location>
</feature>
<feature type="domain" description="NB-ARC">
    <location>
        <begin position="146"/>
        <end position="459"/>
    </location>
</feature>
<feature type="coiled-coil region" evidence="1">
    <location>
        <begin position="15"/>
        <end position="57"/>
    </location>
</feature>
<feature type="binding site" evidence="1">
    <location>
        <begin position="192"/>
        <end position="199"/>
    </location>
    <ligand>
        <name>ATP</name>
        <dbReference type="ChEBI" id="CHEBI:30616"/>
    </ligand>
</feature>
<proteinExistence type="inferred from homology"/>
<accession>P59584</accession>
<name>RP8HA_ARATH</name>
<protein>
    <recommendedName>
        <fullName>Disease resistance protein RPH8A</fullName>
    </recommendedName>
    <alternativeName>
        <fullName>RPP8 homolog A</fullName>
    </alternativeName>
</protein>
<sequence length="910" mass="105264">MAEGFVSFGLEKLWDLLSRESERLQGIDEQLDGLKRQLRSLQSLLKDADAKKHGSDRVRNFLEDVKDLVFDAEDIIESYVLNKLRGEGKGVKKHVRRLARFLTDRHKVASDIEGITKRISEVIGEMQSFGIQQIIDGGRSLSLQERQRVQREIRQTYPDSSESDLVGVEQSVTELVCHLVENDVHQVVSIAGMGGIGKTTLARQVFHHDLVRRHFDGFAWVCVSQQFTQKHVWQRILQELQPHDGEILQMDEYTIQGKLFQLLETGRYLVVLDDVWKKEDWDRIKAVFPRKRGWKMLLTSRNEGVGIHADPTCLTFRASILNPEESWKLCERIVFPRRDETEVRLDEEMEAMGKEMVTHCGGLPLAVKALGGLLANKHTVPEWKRVSDNIGSQIVGGSCLDDNSLNSVYRILSLSYEDLPTHLKHCFLHLAHYPEDSKIYTQDLFNYWAAEGIYDGSTIQDSGEYYLEELVRRNLVIADNRYLISEFKIKNCQMHDMMREVCLSKAKEENFLQIIKDPTCTSTINAQSPSRSRRLSIHSGKAFHILGHKRNAKVRSLIVSRFEEDFWIRSASVFHNLTLLRVLDLSWVKFEGGKLPCSIGGLIHLRYLRLYGAVVSHLPSTMRNLKLLLYLNLSVHNEDLIHVPNVLKEMIELRYLSIPVKMDDKTKLELGDLVNLEYLYGFSTQHTSVTDLLRMTKLRNLTVSLSERYNFKTLSSSLRELRNLETLYVLFSRKTYMVDHMGEFVLDHFIHLKELGLVVRMSKIPDQHQFPPHLVHIFLFYCGMEEDPMPILEKLHHLKSVQLRYKAFVGRRMVCSKDGFTQLCALDISKQSELEDWIVEEGSMPCLRTLTIHDCEKLKELPDGLKYITSLKELKIEGMKREWKEKLVPGGEDYYKVQHIPDVQFINCDQ</sequence>
<keyword id="KW-0067">ATP-binding</keyword>
<keyword id="KW-0175">Coiled coil</keyword>
<keyword id="KW-0381">Hypersensitive response</keyword>
<keyword id="KW-0547">Nucleotide-binding</keyword>
<keyword id="KW-0611">Plant defense</keyword>
<keyword id="KW-0677">Repeat</keyword>
<dbReference type="SMR" id="P59584"/>
<dbReference type="ExpressionAtlas" id="P59584">
    <property type="expression patterns" value="baseline and differential"/>
</dbReference>
<dbReference type="GO" id="GO:0043531">
    <property type="term" value="F:ADP binding"/>
    <property type="evidence" value="ECO:0007669"/>
    <property type="project" value="InterPro"/>
</dbReference>
<dbReference type="GO" id="GO:0005524">
    <property type="term" value="F:ATP binding"/>
    <property type="evidence" value="ECO:0007669"/>
    <property type="project" value="UniProtKB-KW"/>
</dbReference>
<dbReference type="GO" id="GO:0009626">
    <property type="term" value="P:plant-type hypersensitive response"/>
    <property type="evidence" value="ECO:0007669"/>
    <property type="project" value="UniProtKB-KW"/>
</dbReference>
<dbReference type="CDD" id="cd14798">
    <property type="entry name" value="RX-CC_like"/>
    <property type="match status" value="1"/>
</dbReference>
<dbReference type="FunFam" id="1.20.5.4130:FF:000002">
    <property type="entry name" value="Disease resistance protein RPP8"/>
    <property type="match status" value="1"/>
</dbReference>
<dbReference type="FunFam" id="3.80.10.10:FF:000940">
    <property type="entry name" value="Disease resistance RPP8-like protein 3"/>
    <property type="match status" value="1"/>
</dbReference>
<dbReference type="FunFam" id="3.40.50.300:FF:001091">
    <property type="entry name" value="Probable disease resistance protein At1g61300"/>
    <property type="match status" value="1"/>
</dbReference>
<dbReference type="FunFam" id="1.10.10.10:FF:000322">
    <property type="entry name" value="Probable disease resistance protein At1g63360"/>
    <property type="match status" value="1"/>
</dbReference>
<dbReference type="FunFam" id="1.10.8.430:FF:000003">
    <property type="entry name" value="Probable disease resistance protein At5g66910"/>
    <property type="match status" value="1"/>
</dbReference>
<dbReference type="Gene3D" id="1.20.5.4130">
    <property type="match status" value="1"/>
</dbReference>
<dbReference type="Gene3D" id="1.10.8.430">
    <property type="entry name" value="Helical domain of apoptotic protease-activating factors"/>
    <property type="match status" value="1"/>
</dbReference>
<dbReference type="Gene3D" id="3.40.50.300">
    <property type="entry name" value="P-loop containing nucleotide triphosphate hydrolases"/>
    <property type="match status" value="1"/>
</dbReference>
<dbReference type="Gene3D" id="3.80.10.10">
    <property type="entry name" value="Ribonuclease Inhibitor"/>
    <property type="match status" value="2"/>
</dbReference>
<dbReference type="Gene3D" id="1.10.10.10">
    <property type="entry name" value="Winged helix-like DNA-binding domain superfamily/Winged helix DNA-binding domain"/>
    <property type="match status" value="1"/>
</dbReference>
<dbReference type="InterPro" id="IPR042197">
    <property type="entry name" value="Apaf_helical"/>
</dbReference>
<dbReference type="InterPro" id="IPR032675">
    <property type="entry name" value="LRR_dom_sf"/>
</dbReference>
<dbReference type="InterPro" id="IPR055414">
    <property type="entry name" value="LRR_R13L4/SHOC2-like"/>
</dbReference>
<dbReference type="InterPro" id="IPR002182">
    <property type="entry name" value="NB-ARC"/>
</dbReference>
<dbReference type="InterPro" id="IPR027417">
    <property type="entry name" value="P-loop_NTPase"/>
</dbReference>
<dbReference type="InterPro" id="IPR038005">
    <property type="entry name" value="RX-like_CC"/>
</dbReference>
<dbReference type="InterPro" id="IPR041118">
    <property type="entry name" value="Rx_N"/>
</dbReference>
<dbReference type="InterPro" id="IPR036388">
    <property type="entry name" value="WH-like_DNA-bd_sf"/>
</dbReference>
<dbReference type="PANTHER" id="PTHR36766:SF40">
    <property type="entry name" value="DISEASE RESISTANCE PROTEIN RGA3"/>
    <property type="match status" value="1"/>
</dbReference>
<dbReference type="PANTHER" id="PTHR36766">
    <property type="entry name" value="PLANT BROAD-SPECTRUM MILDEW RESISTANCE PROTEIN RPW8"/>
    <property type="match status" value="1"/>
</dbReference>
<dbReference type="Pfam" id="PF23598">
    <property type="entry name" value="LRR_14"/>
    <property type="match status" value="1"/>
</dbReference>
<dbReference type="Pfam" id="PF00931">
    <property type="entry name" value="NB-ARC"/>
    <property type="match status" value="1"/>
</dbReference>
<dbReference type="Pfam" id="PF18052">
    <property type="entry name" value="Rx_N"/>
    <property type="match status" value="1"/>
</dbReference>
<dbReference type="Pfam" id="PF23559">
    <property type="entry name" value="WH_DRP"/>
    <property type="match status" value="1"/>
</dbReference>
<dbReference type="PRINTS" id="PR00364">
    <property type="entry name" value="DISEASERSIST"/>
</dbReference>
<dbReference type="SUPFAM" id="SSF52058">
    <property type="entry name" value="L domain-like"/>
    <property type="match status" value="1"/>
</dbReference>
<dbReference type="SUPFAM" id="SSF52540">
    <property type="entry name" value="P-loop containing nucleoside triphosphate hydrolases"/>
    <property type="match status" value="1"/>
</dbReference>
<evidence type="ECO:0000255" key="1"/>
<evidence type="ECO:0000269" key="2">
    <source>
    </source>
</evidence>
<evidence type="ECO:0000305" key="3"/>